<feature type="peptide" id="PRO_0000420507" description="Pyrokinin-1" evidence="3">
    <location>
        <begin position="1"/>
        <end position="7"/>
    </location>
</feature>
<feature type="modified residue" description="Leucine amide" evidence="3">
    <location>
        <position position="7"/>
    </location>
</feature>
<reference evidence="5" key="1">
    <citation type="journal article" date="2012" name="Syst. Biol.">
        <title>Peptidomics-based phylogeny and biogeography of Mantophasmatodea (Hexapoda).</title>
        <authorList>
            <person name="Predel R."/>
            <person name="Neupert S."/>
            <person name="Huetteroth W."/>
            <person name="Kahnt J."/>
            <person name="Waidelich D."/>
            <person name="Roth S."/>
        </authorList>
    </citation>
    <scope>PROTEIN SEQUENCE</scope>
    <scope>AMIDATION AT LEU-7</scope>
    <source>
        <tissue evidence="3">Corpora cardiaca</tissue>
    </source>
</reference>
<evidence type="ECO:0000250" key="1">
    <source>
        <dbReference type="UniProtKB" id="P82619"/>
    </source>
</evidence>
<evidence type="ECO:0000255" key="2"/>
<evidence type="ECO:0000269" key="3">
    <source>
    </source>
</evidence>
<evidence type="ECO:0000303" key="4">
    <source>
    </source>
</evidence>
<evidence type="ECO:0000305" key="5"/>
<evidence type="ECO:0000305" key="6">
    <source>
    </source>
</evidence>
<dbReference type="GO" id="GO:0005576">
    <property type="term" value="C:extracellular region"/>
    <property type="evidence" value="ECO:0007669"/>
    <property type="project" value="UniProtKB-SubCell"/>
</dbReference>
<dbReference type="GO" id="GO:0007218">
    <property type="term" value="P:neuropeptide signaling pathway"/>
    <property type="evidence" value="ECO:0007669"/>
    <property type="project" value="UniProtKB-KW"/>
</dbReference>
<protein>
    <recommendedName>
        <fullName evidence="4">Pyrokinin-1</fullName>
        <shortName evidence="4">PK-1</shortName>
    </recommendedName>
    <alternativeName>
        <fullName evidence="1">YXPRL-amide</fullName>
    </alternativeName>
</protein>
<organism>
    <name type="scientific">Namaquaphasma ookiepense</name>
    <name type="common">Gladiator bug</name>
    <dbReference type="NCBI Taxonomy" id="409167"/>
    <lineage>
        <taxon>Eukaryota</taxon>
        <taxon>Metazoa</taxon>
        <taxon>Ecdysozoa</taxon>
        <taxon>Arthropoda</taxon>
        <taxon>Hexapoda</taxon>
        <taxon>Insecta</taxon>
        <taxon>Pterygota</taxon>
        <taxon>Neoptera</taxon>
        <taxon>Polyneoptera</taxon>
        <taxon>Mantophasmatodea</taxon>
        <taxon>Austrophasmatidae</taxon>
        <taxon>Namaquaphasma</taxon>
    </lineage>
</organism>
<accession>B0M2U2</accession>
<keyword id="KW-0027">Amidation</keyword>
<keyword id="KW-0903">Direct protein sequencing</keyword>
<keyword id="KW-0527">Neuropeptide</keyword>
<keyword id="KW-0964">Secreted</keyword>
<comment type="function">
    <text evidence="1">Myoactive.</text>
</comment>
<comment type="subcellular location">
    <subcellularLocation>
        <location evidence="6">Secreted</location>
    </subcellularLocation>
</comment>
<comment type="similarity">
    <text evidence="2">Belongs to the pyrokinin family.</text>
</comment>
<proteinExistence type="evidence at protein level"/>
<name>PPK1_NAMOO</name>
<sequence>DGYTPRL</sequence>